<keyword id="KW-0539">Nucleus</keyword>
<keyword id="KW-1185">Reference proteome</keyword>
<keyword id="KW-0677">Repeat</keyword>
<keyword id="KW-0853">WD repeat</keyword>
<gene>
    <name type="primary">JIP5</name>
    <name type="ORF">MGG_08053</name>
</gene>
<evidence type="ECO:0000250" key="1"/>
<evidence type="ECO:0000256" key="2">
    <source>
        <dbReference type="SAM" id="MobiDB-lite"/>
    </source>
</evidence>
<evidence type="ECO:0000305" key="3"/>
<accession>A4RGU7</accession>
<accession>G4MXR1</accession>
<sequence>MLENLCTLPLSADLFAQALHPEKPLLTVGLSSGHVHTFSLPPAKKDGKGLIKEIWSTRRHKGSCRCLVYGHDGKALYSAGTDCIVKHFDPETGKVKSKINIPKRGNHDDPPAIMHALTPKTLLLGTDSGALYILDLLKDGSLSPEPVRKHMPHDDYVTSITPLPPSAESTSGFSKQWVSTGGSTLAVTDVRSGIMARSEDQEDELLCSAIIPSGLGPKKMRGNAVVAVGTGSGVLTMWDRGSWDDQQERIYVAGGRGKKEPESLDCIVRVPASHGSGTKVAVGVGDGSVCIVDLRRREVELTLRHDEVEGVTAIGFDCYDRMISGGGKVVKVWAEADSPEEAESEDDDEDGSSKKRQRDDDDDSDDSDSDDDSSEDEKPAKSNSKRRKGKGPLPGTIAFPGLD</sequence>
<reference key="1">
    <citation type="journal article" date="2005" name="Nature">
        <title>The genome sequence of the rice blast fungus Magnaporthe grisea.</title>
        <authorList>
            <person name="Dean R.A."/>
            <person name="Talbot N.J."/>
            <person name="Ebbole D.J."/>
            <person name="Farman M.L."/>
            <person name="Mitchell T.K."/>
            <person name="Orbach M.J."/>
            <person name="Thon M.R."/>
            <person name="Kulkarni R."/>
            <person name="Xu J.-R."/>
            <person name="Pan H."/>
            <person name="Read N.D."/>
            <person name="Lee Y.-H."/>
            <person name="Carbone I."/>
            <person name="Brown D."/>
            <person name="Oh Y.Y."/>
            <person name="Donofrio N."/>
            <person name="Jeong J.S."/>
            <person name="Soanes D.M."/>
            <person name="Djonovic S."/>
            <person name="Kolomiets E."/>
            <person name="Rehmeyer C."/>
            <person name="Li W."/>
            <person name="Harding M."/>
            <person name="Kim S."/>
            <person name="Lebrun M.-H."/>
            <person name="Bohnert H."/>
            <person name="Coughlan S."/>
            <person name="Butler J."/>
            <person name="Calvo S.E."/>
            <person name="Ma L.-J."/>
            <person name="Nicol R."/>
            <person name="Purcell S."/>
            <person name="Nusbaum C."/>
            <person name="Galagan J.E."/>
            <person name="Birren B.W."/>
        </authorList>
    </citation>
    <scope>NUCLEOTIDE SEQUENCE [LARGE SCALE GENOMIC DNA]</scope>
    <source>
        <strain>70-15 / ATCC MYA-4617 / FGSC 8958</strain>
    </source>
</reference>
<dbReference type="EMBL" id="CM001232">
    <property type="protein sequence ID" value="EHA55198.1"/>
    <property type="molecule type" value="Genomic_DNA"/>
</dbReference>
<dbReference type="RefSeq" id="XP_003715005.1">
    <property type="nucleotide sequence ID" value="XM_003714957.1"/>
</dbReference>
<dbReference type="SMR" id="A4RGU7"/>
<dbReference type="FunCoup" id="A4RGU7">
    <property type="interactions" value="101"/>
</dbReference>
<dbReference type="STRING" id="242507.A4RGU7"/>
<dbReference type="EnsemblFungi" id="MGG_08053T0">
    <property type="protein sequence ID" value="MGG_08053T0"/>
    <property type="gene ID" value="MGG_08053"/>
</dbReference>
<dbReference type="GeneID" id="2678311"/>
<dbReference type="KEGG" id="mgr:MGG_08053"/>
<dbReference type="VEuPathDB" id="FungiDB:MGG_08053"/>
<dbReference type="eggNOG" id="KOG2444">
    <property type="taxonomic scope" value="Eukaryota"/>
</dbReference>
<dbReference type="HOGENOM" id="CLU_052691_0_0_1"/>
<dbReference type="InParanoid" id="A4RGU7"/>
<dbReference type="OMA" id="QAIHPTE"/>
<dbReference type="OrthoDB" id="2288928at2759"/>
<dbReference type="Proteomes" id="UP000009058">
    <property type="component" value="Chromosome 2"/>
</dbReference>
<dbReference type="GO" id="GO:0005730">
    <property type="term" value="C:nucleolus"/>
    <property type="evidence" value="ECO:0007669"/>
    <property type="project" value="UniProtKB-SubCell"/>
</dbReference>
<dbReference type="Gene3D" id="2.130.10.10">
    <property type="entry name" value="YVTN repeat-like/Quinoprotein amine dehydrogenase"/>
    <property type="match status" value="2"/>
</dbReference>
<dbReference type="InterPro" id="IPR015943">
    <property type="entry name" value="WD40/YVTN_repeat-like_dom_sf"/>
</dbReference>
<dbReference type="InterPro" id="IPR036322">
    <property type="entry name" value="WD40_repeat_dom_sf"/>
</dbReference>
<dbReference type="InterPro" id="IPR001680">
    <property type="entry name" value="WD40_rpt"/>
</dbReference>
<dbReference type="InterPro" id="IPR050505">
    <property type="entry name" value="WDR55_POC1"/>
</dbReference>
<dbReference type="PANTHER" id="PTHR44019">
    <property type="entry name" value="WD REPEAT-CONTAINING PROTEIN 55"/>
    <property type="match status" value="1"/>
</dbReference>
<dbReference type="PANTHER" id="PTHR44019:SF20">
    <property type="entry name" value="WD REPEAT-CONTAINING PROTEIN 55"/>
    <property type="match status" value="1"/>
</dbReference>
<dbReference type="SMART" id="SM00320">
    <property type="entry name" value="WD40"/>
    <property type="match status" value="4"/>
</dbReference>
<dbReference type="SUPFAM" id="SSF50978">
    <property type="entry name" value="WD40 repeat-like"/>
    <property type="match status" value="1"/>
</dbReference>
<feature type="chain" id="PRO_0000333563" description="WD repeat-containing protein JIP5">
    <location>
        <begin position="1"/>
        <end position="403"/>
    </location>
</feature>
<feature type="repeat" description="WD 1">
    <location>
        <begin position="9"/>
        <end position="48"/>
    </location>
</feature>
<feature type="repeat" description="WD 2">
    <location>
        <begin position="59"/>
        <end position="98"/>
    </location>
</feature>
<feature type="repeat" description="WD 3">
    <location>
        <begin position="105"/>
        <end position="144"/>
    </location>
</feature>
<feature type="repeat" description="WD 4">
    <location>
        <begin position="200"/>
        <end position="248"/>
    </location>
</feature>
<feature type="repeat" description="WD 5">
    <location>
        <begin position="306"/>
        <end position="343"/>
    </location>
</feature>
<feature type="region of interest" description="Disordered" evidence="2">
    <location>
        <begin position="335"/>
        <end position="403"/>
    </location>
</feature>
<feature type="compositionally biased region" description="Acidic residues" evidence="2">
    <location>
        <begin position="337"/>
        <end position="350"/>
    </location>
</feature>
<feature type="compositionally biased region" description="Acidic residues" evidence="2">
    <location>
        <begin position="360"/>
        <end position="375"/>
    </location>
</feature>
<name>JIP5_PYRO7</name>
<comment type="subcellular location">
    <subcellularLocation>
        <location evidence="1">Nucleus</location>
        <location evidence="1">Nucleolus</location>
    </subcellularLocation>
</comment>
<comment type="similarity">
    <text evidence="3">Belongs to the WD repeat WDR55 family.</text>
</comment>
<protein>
    <recommendedName>
        <fullName>WD repeat-containing protein JIP5</fullName>
    </recommendedName>
</protein>
<proteinExistence type="inferred from homology"/>
<organism>
    <name type="scientific">Pyricularia oryzae (strain 70-15 / ATCC MYA-4617 / FGSC 8958)</name>
    <name type="common">Rice blast fungus</name>
    <name type="synonym">Magnaporthe oryzae</name>
    <dbReference type="NCBI Taxonomy" id="242507"/>
    <lineage>
        <taxon>Eukaryota</taxon>
        <taxon>Fungi</taxon>
        <taxon>Dikarya</taxon>
        <taxon>Ascomycota</taxon>
        <taxon>Pezizomycotina</taxon>
        <taxon>Sordariomycetes</taxon>
        <taxon>Sordariomycetidae</taxon>
        <taxon>Magnaporthales</taxon>
        <taxon>Pyriculariaceae</taxon>
        <taxon>Pyricularia</taxon>
    </lineage>
</organism>